<comment type="function">
    <text evidence="1">This protein is one of the two subunits of integration host factor, a specific DNA-binding protein that functions in genetic recombination as well as in transcriptional and translational control.</text>
</comment>
<comment type="subunit">
    <text evidence="1">Heterodimer of an alpha and a beta chain.</text>
</comment>
<comment type="similarity">
    <text evidence="1">Belongs to the bacterial histone-like protein family.</text>
</comment>
<feature type="chain" id="PRO_0000277736" description="Integration host factor subunit alpha">
    <location>
        <begin position="1"/>
        <end position="100"/>
    </location>
</feature>
<proteinExistence type="inferred from homology"/>
<protein>
    <recommendedName>
        <fullName evidence="1">Integration host factor subunit alpha</fullName>
        <shortName evidence="1">IHF-alpha</shortName>
    </recommendedName>
</protein>
<sequence length="100" mass="11079">MSGKTLTRMDLSEAVFREVGLSRNESSELVERVLQLMSDALVDGEQVKVSSFGTFSVRSKTARVGRNPKTGEEVPISPRRVLTFRPSHLMKDRVAAGNRS</sequence>
<dbReference type="EMBL" id="CP000264">
    <property type="protein sequence ID" value="ABD54700.1"/>
    <property type="molecule type" value="Genomic_DNA"/>
</dbReference>
<dbReference type="RefSeq" id="WP_011454905.1">
    <property type="nucleotide sequence ID" value="NC_007802.1"/>
</dbReference>
<dbReference type="SMR" id="Q28RG2"/>
<dbReference type="STRING" id="290400.Jann_1783"/>
<dbReference type="KEGG" id="jan:Jann_1783"/>
<dbReference type="eggNOG" id="COG0776">
    <property type="taxonomic scope" value="Bacteria"/>
</dbReference>
<dbReference type="HOGENOM" id="CLU_105066_1_1_5"/>
<dbReference type="OrthoDB" id="9797747at2"/>
<dbReference type="Proteomes" id="UP000008326">
    <property type="component" value="Chromosome"/>
</dbReference>
<dbReference type="GO" id="GO:0005829">
    <property type="term" value="C:cytosol"/>
    <property type="evidence" value="ECO:0007669"/>
    <property type="project" value="TreeGrafter"/>
</dbReference>
<dbReference type="GO" id="GO:0003677">
    <property type="term" value="F:DNA binding"/>
    <property type="evidence" value="ECO:0007669"/>
    <property type="project" value="UniProtKB-UniRule"/>
</dbReference>
<dbReference type="GO" id="GO:0030527">
    <property type="term" value="F:structural constituent of chromatin"/>
    <property type="evidence" value="ECO:0007669"/>
    <property type="project" value="InterPro"/>
</dbReference>
<dbReference type="GO" id="GO:0006310">
    <property type="term" value="P:DNA recombination"/>
    <property type="evidence" value="ECO:0007669"/>
    <property type="project" value="UniProtKB-UniRule"/>
</dbReference>
<dbReference type="GO" id="GO:0009893">
    <property type="term" value="P:positive regulation of metabolic process"/>
    <property type="evidence" value="ECO:0007669"/>
    <property type="project" value="UniProtKB-ARBA"/>
</dbReference>
<dbReference type="GO" id="GO:0006355">
    <property type="term" value="P:regulation of DNA-templated transcription"/>
    <property type="evidence" value="ECO:0007669"/>
    <property type="project" value="UniProtKB-UniRule"/>
</dbReference>
<dbReference type="GO" id="GO:0006417">
    <property type="term" value="P:regulation of translation"/>
    <property type="evidence" value="ECO:0007669"/>
    <property type="project" value="UniProtKB-UniRule"/>
</dbReference>
<dbReference type="CDD" id="cd13835">
    <property type="entry name" value="IHF_A"/>
    <property type="match status" value="1"/>
</dbReference>
<dbReference type="Gene3D" id="4.10.520.10">
    <property type="entry name" value="IHF-like DNA-binding proteins"/>
    <property type="match status" value="1"/>
</dbReference>
<dbReference type="HAMAP" id="MF_00380">
    <property type="entry name" value="IHF_alpha"/>
    <property type="match status" value="1"/>
</dbReference>
<dbReference type="InterPro" id="IPR000119">
    <property type="entry name" value="Hist_DNA-bd"/>
</dbReference>
<dbReference type="InterPro" id="IPR020816">
    <property type="entry name" value="Histone-like_DNA-bd_CS"/>
</dbReference>
<dbReference type="InterPro" id="IPR010992">
    <property type="entry name" value="IHF-like_DNA-bd_dom_sf"/>
</dbReference>
<dbReference type="InterPro" id="IPR005684">
    <property type="entry name" value="IHF_alpha"/>
</dbReference>
<dbReference type="NCBIfam" id="TIGR00987">
    <property type="entry name" value="himA"/>
    <property type="match status" value="1"/>
</dbReference>
<dbReference type="NCBIfam" id="NF001401">
    <property type="entry name" value="PRK00285.1"/>
    <property type="match status" value="1"/>
</dbReference>
<dbReference type="PANTHER" id="PTHR33175">
    <property type="entry name" value="DNA-BINDING PROTEIN HU"/>
    <property type="match status" value="1"/>
</dbReference>
<dbReference type="PANTHER" id="PTHR33175:SF2">
    <property type="entry name" value="INTEGRATION HOST FACTOR SUBUNIT ALPHA"/>
    <property type="match status" value="1"/>
</dbReference>
<dbReference type="Pfam" id="PF00216">
    <property type="entry name" value="Bac_DNA_binding"/>
    <property type="match status" value="1"/>
</dbReference>
<dbReference type="PRINTS" id="PR01727">
    <property type="entry name" value="DNABINDINGHU"/>
</dbReference>
<dbReference type="SMART" id="SM00411">
    <property type="entry name" value="BHL"/>
    <property type="match status" value="1"/>
</dbReference>
<dbReference type="SUPFAM" id="SSF47729">
    <property type="entry name" value="IHF-like DNA-binding proteins"/>
    <property type="match status" value="1"/>
</dbReference>
<dbReference type="PROSITE" id="PS00045">
    <property type="entry name" value="HISTONE_LIKE"/>
    <property type="match status" value="1"/>
</dbReference>
<gene>
    <name evidence="1" type="primary">ihfA</name>
    <name evidence="1" type="synonym">himA</name>
    <name type="ordered locus">Jann_1783</name>
</gene>
<accession>Q28RG2</accession>
<keyword id="KW-0233">DNA recombination</keyword>
<keyword id="KW-0238">DNA-binding</keyword>
<keyword id="KW-1185">Reference proteome</keyword>
<keyword id="KW-0804">Transcription</keyword>
<keyword id="KW-0805">Transcription regulation</keyword>
<keyword id="KW-0810">Translation regulation</keyword>
<reference key="1">
    <citation type="submission" date="2006-02" db="EMBL/GenBank/DDBJ databases">
        <title>Complete sequence of chromosome of Jannaschia sp. CCS1.</title>
        <authorList>
            <consortium name="US DOE Joint Genome Institute"/>
            <person name="Copeland A."/>
            <person name="Lucas S."/>
            <person name="Lapidus A."/>
            <person name="Barry K."/>
            <person name="Detter J.C."/>
            <person name="Glavina del Rio T."/>
            <person name="Hammon N."/>
            <person name="Israni S."/>
            <person name="Pitluck S."/>
            <person name="Brettin T."/>
            <person name="Bruce D."/>
            <person name="Han C."/>
            <person name="Tapia R."/>
            <person name="Gilna P."/>
            <person name="Chertkov O."/>
            <person name="Saunders E."/>
            <person name="Schmutz J."/>
            <person name="Larimer F."/>
            <person name="Land M."/>
            <person name="Kyrpides N."/>
            <person name="Lykidis A."/>
            <person name="Moran M.A."/>
            <person name="Belas R."/>
            <person name="Ye W."/>
            <person name="Buchan A."/>
            <person name="Gonzalez J.M."/>
            <person name="Schell M.A."/>
            <person name="Richardson P."/>
        </authorList>
    </citation>
    <scope>NUCLEOTIDE SEQUENCE [LARGE SCALE GENOMIC DNA]</scope>
    <source>
        <strain>CCS1</strain>
    </source>
</reference>
<name>IHFA_JANSC</name>
<evidence type="ECO:0000255" key="1">
    <source>
        <dbReference type="HAMAP-Rule" id="MF_00380"/>
    </source>
</evidence>
<organism>
    <name type="scientific">Jannaschia sp. (strain CCS1)</name>
    <dbReference type="NCBI Taxonomy" id="290400"/>
    <lineage>
        <taxon>Bacteria</taxon>
        <taxon>Pseudomonadati</taxon>
        <taxon>Pseudomonadota</taxon>
        <taxon>Alphaproteobacteria</taxon>
        <taxon>Rhodobacterales</taxon>
        <taxon>Roseobacteraceae</taxon>
        <taxon>Jannaschia</taxon>
    </lineage>
</organism>